<gene>
    <name evidence="1" type="primary">kdsA</name>
    <name type="ordered locus">JJD26997_1574</name>
</gene>
<dbReference type="EC" id="2.5.1.55" evidence="1"/>
<dbReference type="EMBL" id="CP000768">
    <property type="protein sequence ID" value="ABS44277.1"/>
    <property type="molecule type" value="Genomic_DNA"/>
</dbReference>
<dbReference type="SMR" id="A7H4Z3"/>
<dbReference type="KEGG" id="cjd:JJD26997_1574"/>
<dbReference type="HOGENOM" id="CLU_036666_0_0_7"/>
<dbReference type="UniPathway" id="UPA00030"/>
<dbReference type="UniPathway" id="UPA00357">
    <property type="reaction ID" value="UER00474"/>
</dbReference>
<dbReference type="Proteomes" id="UP000002302">
    <property type="component" value="Chromosome"/>
</dbReference>
<dbReference type="GO" id="GO:0005737">
    <property type="term" value="C:cytoplasm"/>
    <property type="evidence" value="ECO:0007669"/>
    <property type="project" value="UniProtKB-SubCell"/>
</dbReference>
<dbReference type="GO" id="GO:0008676">
    <property type="term" value="F:3-deoxy-8-phosphooctulonate synthase activity"/>
    <property type="evidence" value="ECO:0007669"/>
    <property type="project" value="UniProtKB-UniRule"/>
</dbReference>
<dbReference type="GO" id="GO:0019294">
    <property type="term" value="P:keto-3-deoxy-D-manno-octulosonic acid biosynthetic process"/>
    <property type="evidence" value="ECO:0007669"/>
    <property type="project" value="UniProtKB-UniRule"/>
</dbReference>
<dbReference type="Gene3D" id="3.20.20.70">
    <property type="entry name" value="Aldolase class I"/>
    <property type="match status" value="1"/>
</dbReference>
<dbReference type="HAMAP" id="MF_00056">
    <property type="entry name" value="KDO8P_synth"/>
    <property type="match status" value="1"/>
</dbReference>
<dbReference type="InterPro" id="IPR013785">
    <property type="entry name" value="Aldolase_TIM"/>
</dbReference>
<dbReference type="InterPro" id="IPR006218">
    <property type="entry name" value="DAHP1/KDSA"/>
</dbReference>
<dbReference type="InterPro" id="IPR006269">
    <property type="entry name" value="KDO8P_synthase"/>
</dbReference>
<dbReference type="NCBIfam" id="TIGR01362">
    <property type="entry name" value="KDO8P_synth"/>
    <property type="match status" value="1"/>
</dbReference>
<dbReference type="NCBIfam" id="NF003543">
    <property type="entry name" value="PRK05198.1"/>
    <property type="match status" value="1"/>
</dbReference>
<dbReference type="PANTHER" id="PTHR21057">
    <property type="entry name" value="PHOSPHO-2-DEHYDRO-3-DEOXYHEPTONATE ALDOLASE"/>
    <property type="match status" value="1"/>
</dbReference>
<dbReference type="Pfam" id="PF00793">
    <property type="entry name" value="DAHP_synth_1"/>
    <property type="match status" value="1"/>
</dbReference>
<dbReference type="SUPFAM" id="SSF51569">
    <property type="entry name" value="Aldolase"/>
    <property type="match status" value="1"/>
</dbReference>
<sequence>MKKMILIAGPCVIESKDLIFKVAKQLKNFNENPNIEFYFKSSFDKANRTSINSFRGPGLEEGLKILQSVKDEFGMKILTDIHESNQANPVSEVADVLQIPAFLCRQTDLLVAAAKTKAKVNIKKGQFLNPSDIKYSVKKVLQTRGIEDEGYEAAQKNGVFVAERGASFGYGNLVVDMRSLVIMREFAPVIFDATHSVQMPGAAGGSSGGKSEFVEPLARAAAAVGIDGFFFETHINPCEALCDGPNMLDLTRLKNCVNTLLEIQNII</sequence>
<proteinExistence type="inferred from homology"/>
<accession>A7H4Z3</accession>
<feature type="chain" id="PRO_1000003332" description="2-dehydro-3-deoxyphosphooctonate aldolase">
    <location>
        <begin position="1"/>
        <end position="267"/>
    </location>
</feature>
<organism>
    <name type="scientific">Campylobacter jejuni subsp. doylei (strain ATCC BAA-1458 / RM4099 / 269.97)</name>
    <dbReference type="NCBI Taxonomy" id="360109"/>
    <lineage>
        <taxon>Bacteria</taxon>
        <taxon>Pseudomonadati</taxon>
        <taxon>Campylobacterota</taxon>
        <taxon>Epsilonproteobacteria</taxon>
        <taxon>Campylobacterales</taxon>
        <taxon>Campylobacteraceae</taxon>
        <taxon>Campylobacter</taxon>
    </lineage>
</organism>
<name>KDSA_CAMJD</name>
<keyword id="KW-0963">Cytoplasm</keyword>
<keyword id="KW-0448">Lipopolysaccharide biosynthesis</keyword>
<keyword id="KW-0808">Transferase</keyword>
<reference key="1">
    <citation type="submission" date="2007-07" db="EMBL/GenBank/DDBJ databases">
        <title>Complete genome sequence of Campylobacter jejuni subsp doylei 269.97 isolated from human blood.</title>
        <authorList>
            <person name="Fouts D.E."/>
            <person name="Mongodin E.F."/>
            <person name="Puiu D."/>
            <person name="Sebastian Y."/>
            <person name="Miller W.G."/>
            <person name="Mandrell R.E."/>
            <person name="Lastovica A.J."/>
            <person name="Nelson K.E."/>
        </authorList>
    </citation>
    <scope>NUCLEOTIDE SEQUENCE [LARGE SCALE GENOMIC DNA]</scope>
    <source>
        <strain>ATCC BAA-1458 / RM4099 / 269.97</strain>
    </source>
</reference>
<comment type="catalytic activity">
    <reaction evidence="1">
        <text>D-arabinose 5-phosphate + phosphoenolpyruvate + H2O = 3-deoxy-alpha-D-manno-2-octulosonate-8-phosphate + phosphate</text>
        <dbReference type="Rhea" id="RHEA:14053"/>
        <dbReference type="ChEBI" id="CHEBI:15377"/>
        <dbReference type="ChEBI" id="CHEBI:43474"/>
        <dbReference type="ChEBI" id="CHEBI:57693"/>
        <dbReference type="ChEBI" id="CHEBI:58702"/>
        <dbReference type="ChEBI" id="CHEBI:85985"/>
        <dbReference type="EC" id="2.5.1.55"/>
    </reaction>
</comment>
<comment type="pathway">
    <text evidence="1">Carbohydrate biosynthesis; 3-deoxy-D-manno-octulosonate biosynthesis; 3-deoxy-D-manno-octulosonate from D-ribulose 5-phosphate: step 2/3.</text>
</comment>
<comment type="pathway">
    <text evidence="1">Bacterial outer membrane biogenesis; lipopolysaccharide biosynthesis.</text>
</comment>
<comment type="subcellular location">
    <subcellularLocation>
        <location evidence="1">Cytoplasm</location>
    </subcellularLocation>
</comment>
<comment type="similarity">
    <text evidence="1">Belongs to the KdsA family.</text>
</comment>
<evidence type="ECO:0000255" key="1">
    <source>
        <dbReference type="HAMAP-Rule" id="MF_00056"/>
    </source>
</evidence>
<protein>
    <recommendedName>
        <fullName evidence="1">2-dehydro-3-deoxyphosphooctonate aldolase</fullName>
        <ecNumber evidence="1">2.5.1.55</ecNumber>
    </recommendedName>
    <alternativeName>
        <fullName evidence="1">3-deoxy-D-manno-octulosonic acid 8-phosphate synthase</fullName>
    </alternativeName>
    <alternativeName>
        <fullName evidence="1">KDO-8-phosphate synthase</fullName>
        <shortName evidence="1">KDO 8-P synthase</shortName>
        <shortName evidence="1">KDOPS</shortName>
    </alternativeName>
    <alternativeName>
        <fullName evidence="1">Phospho-2-dehydro-3-deoxyoctonate aldolase</fullName>
    </alternativeName>
</protein>